<sequence>MNALLTPDYGLIFWTIVNFLLLVFLLGKFAWKPIIGALEARENKISQDKKDAQEARDEAQKIKAELDVRLSNISKEAQEKLAQVEALAKQQKDAMIKDAQASSERMIATAKEEIEAQKNQALKEVKKEIADMAVEAAAKIAGVKTDPKTDAALVDNIVKDIINKA</sequence>
<keyword id="KW-0066">ATP synthesis</keyword>
<keyword id="KW-1003">Cell membrane</keyword>
<keyword id="KW-0138">CF(0)</keyword>
<keyword id="KW-0375">Hydrogen ion transport</keyword>
<keyword id="KW-0406">Ion transport</keyword>
<keyword id="KW-0472">Membrane</keyword>
<keyword id="KW-1185">Reference proteome</keyword>
<keyword id="KW-0812">Transmembrane</keyword>
<keyword id="KW-1133">Transmembrane helix</keyword>
<keyword id="KW-0813">Transport</keyword>
<evidence type="ECO:0000255" key="1">
    <source>
        <dbReference type="HAMAP-Rule" id="MF_01398"/>
    </source>
</evidence>
<name>ATPF_ELUMP</name>
<accession>B2KEW8</accession>
<gene>
    <name evidence="1" type="primary">atpF</name>
    <name type="ordered locus">Emin_1517</name>
</gene>
<reference key="1">
    <citation type="journal article" date="2009" name="Appl. Environ. Microbiol.">
        <title>Genomic analysis of 'Elusimicrobium minutum,' the first cultivated representative of the phylum 'Elusimicrobia' (formerly termite group 1).</title>
        <authorList>
            <person name="Herlemann D.P.R."/>
            <person name="Geissinger O."/>
            <person name="Ikeda-Ohtsubo W."/>
            <person name="Kunin V."/>
            <person name="Sun H."/>
            <person name="Lapidus A."/>
            <person name="Hugenholtz P."/>
            <person name="Brune A."/>
        </authorList>
    </citation>
    <scope>NUCLEOTIDE SEQUENCE [LARGE SCALE GENOMIC DNA]</scope>
    <source>
        <strain>Pei191</strain>
    </source>
</reference>
<dbReference type="EMBL" id="CP001055">
    <property type="protein sequence ID" value="ACC99064.1"/>
    <property type="molecule type" value="Genomic_DNA"/>
</dbReference>
<dbReference type="RefSeq" id="WP_012415678.1">
    <property type="nucleotide sequence ID" value="NC_010644.1"/>
</dbReference>
<dbReference type="SMR" id="B2KEW8"/>
<dbReference type="STRING" id="445932.Emin_1517"/>
<dbReference type="KEGG" id="emi:Emin_1517"/>
<dbReference type="HOGENOM" id="CLU_079215_4_1_0"/>
<dbReference type="OrthoDB" id="308784at2"/>
<dbReference type="Proteomes" id="UP000001029">
    <property type="component" value="Chromosome"/>
</dbReference>
<dbReference type="GO" id="GO:0005886">
    <property type="term" value="C:plasma membrane"/>
    <property type="evidence" value="ECO:0007669"/>
    <property type="project" value="UniProtKB-SubCell"/>
</dbReference>
<dbReference type="GO" id="GO:0045259">
    <property type="term" value="C:proton-transporting ATP synthase complex"/>
    <property type="evidence" value="ECO:0007669"/>
    <property type="project" value="UniProtKB-KW"/>
</dbReference>
<dbReference type="GO" id="GO:0046933">
    <property type="term" value="F:proton-transporting ATP synthase activity, rotational mechanism"/>
    <property type="evidence" value="ECO:0007669"/>
    <property type="project" value="UniProtKB-UniRule"/>
</dbReference>
<dbReference type="GO" id="GO:0046961">
    <property type="term" value="F:proton-transporting ATPase activity, rotational mechanism"/>
    <property type="evidence" value="ECO:0007669"/>
    <property type="project" value="TreeGrafter"/>
</dbReference>
<dbReference type="CDD" id="cd06503">
    <property type="entry name" value="ATP-synt_Fo_b"/>
    <property type="match status" value="1"/>
</dbReference>
<dbReference type="HAMAP" id="MF_01398">
    <property type="entry name" value="ATP_synth_b_bprime"/>
    <property type="match status" value="1"/>
</dbReference>
<dbReference type="InterPro" id="IPR028987">
    <property type="entry name" value="ATP_synth_B-like_membr_sf"/>
</dbReference>
<dbReference type="InterPro" id="IPR002146">
    <property type="entry name" value="ATP_synth_b/b'su_bac/chlpt"/>
</dbReference>
<dbReference type="InterPro" id="IPR005864">
    <property type="entry name" value="ATP_synth_F0_bsu_bac"/>
</dbReference>
<dbReference type="InterPro" id="IPR050059">
    <property type="entry name" value="ATP_synthase_B_chain"/>
</dbReference>
<dbReference type="NCBIfam" id="TIGR01144">
    <property type="entry name" value="ATP_synt_b"/>
    <property type="match status" value="1"/>
</dbReference>
<dbReference type="PANTHER" id="PTHR33445:SF1">
    <property type="entry name" value="ATP SYNTHASE SUBUNIT B"/>
    <property type="match status" value="1"/>
</dbReference>
<dbReference type="PANTHER" id="PTHR33445">
    <property type="entry name" value="ATP SYNTHASE SUBUNIT B', CHLOROPLASTIC"/>
    <property type="match status" value="1"/>
</dbReference>
<dbReference type="Pfam" id="PF00430">
    <property type="entry name" value="ATP-synt_B"/>
    <property type="match status" value="1"/>
</dbReference>
<dbReference type="SUPFAM" id="SSF81573">
    <property type="entry name" value="F1F0 ATP synthase subunit B, membrane domain"/>
    <property type="match status" value="1"/>
</dbReference>
<proteinExistence type="inferred from homology"/>
<comment type="function">
    <text evidence="1">F(1)F(0) ATP synthase produces ATP from ADP in the presence of a proton or sodium gradient. F-type ATPases consist of two structural domains, F(1) containing the extramembraneous catalytic core and F(0) containing the membrane proton channel, linked together by a central stalk and a peripheral stalk. During catalysis, ATP synthesis in the catalytic domain of F(1) is coupled via a rotary mechanism of the central stalk subunits to proton translocation.</text>
</comment>
<comment type="function">
    <text evidence="1">Component of the F(0) channel, it forms part of the peripheral stalk, linking F(1) to F(0).</text>
</comment>
<comment type="subunit">
    <text evidence="1">F-type ATPases have 2 components, F(1) - the catalytic core - and F(0) - the membrane proton channel. F(1) has five subunits: alpha(3), beta(3), gamma(1), delta(1), epsilon(1). F(0) has three main subunits: a(1), b(2) and c(10-14). The alpha and beta chains form an alternating ring which encloses part of the gamma chain. F(1) is attached to F(0) by a central stalk formed by the gamma and epsilon chains, while a peripheral stalk is formed by the delta and b chains.</text>
</comment>
<comment type="subcellular location">
    <subcellularLocation>
        <location evidence="1">Cell membrane</location>
        <topology evidence="1">Single-pass membrane protein</topology>
    </subcellularLocation>
</comment>
<comment type="similarity">
    <text evidence="1">Belongs to the ATPase B chain family.</text>
</comment>
<organism>
    <name type="scientific">Elusimicrobium minutum (strain Pei191)</name>
    <dbReference type="NCBI Taxonomy" id="445932"/>
    <lineage>
        <taxon>Bacteria</taxon>
        <taxon>Pseudomonadati</taxon>
        <taxon>Elusimicrobiota</taxon>
        <taxon>Elusimicrobia</taxon>
        <taxon>Elusimicrobiales</taxon>
        <taxon>Elusimicrobiaceae</taxon>
        <taxon>Elusimicrobium</taxon>
    </lineage>
</organism>
<feature type="chain" id="PRO_0000368466" description="ATP synthase subunit b">
    <location>
        <begin position="1"/>
        <end position="165"/>
    </location>
</feature>
<feature type="transmembrane region" description="Helical" evidence="1">
    <location>
        <begin position="11"/>
        <end position="31"/>
    </location>
</feature>
<protein>
    <recommendedName>
        <fullName evidence="1">ATP synthase subunit b</fullName>
    </recommendedName>
    <alternativeName>
        <fullName evidence="1">ATP synthase F(0) sector subunit b</fullName>
    </alternativeName>
    <alternativeName>
        <fullName evidence="1">ATPase subunit I</fullName>
    </alternativeName>
    <alternativeName>
        <fullName evidence="1">F-type ATPase subunit b</fullName>
        <shortName evidence="1">F-ATPase subunit b</shortName>
    </alternativeName>
</protein>